<dbReference type="EMBL" id="CP000896">
    <property type="protein sequence ID" value="ABX80686.1"/>
    <property type="molecule type" value="Genomic_DNA"/>
</dbReference>
<dbReference type="RefSeq" id="WP_012242017.1">
    <property type="nucleotide sequence ID" value="NC_010163.1"/>
</dbReference>
<dbReference type="SMR" id="A9NEA6"/>
<dbReference type="STRING" id="441768.ACL_0044"/>
<dbReference type="GeneID" id="41338249"/>
<dbReference type="KEGG" id="acl:ACL_0044"/>
<dbReference type="eggNOG" id="COG0217">
    <property type="taxonomic scope" value="Bacteria"/>
</dbReference>
<dbReference type="HOGENOM" id="CLU_062974_2_0_14"/>
<dbReference type="OrthoDB" id="9781053at2"/>
<dbReference type="Proteomes" id="UP000008558">
    <property type="component" value="Chromosome"/>
</dbReference>
<dbReference type="GO" id="GO:0005829">
    <property type="term" value="C:cytosol"/>
    <property type="evidence" value="ECO:0007669"/>
    <property type="project" value="TreeGrafter"/>
</dbReference>
<dbReference type="GO" id="GO:0003677">
    <property type="term" value="F:DNA binding"/>
    <property type="evidence" value="ECO:0007669"/>
    <property type="project" value="UniProtKB-UniRule"/>
</dbReference>
<dbReference type="GO" id="GO:0006355">
    <property type="term" value="P:regulation of DNA-templated transcription"/>
    <property type="evidence" value="ECO:0007669"/>
    <property type="project" value="UniProtKB-UniRule"/>
</dbReference>
<dbReference type="Gene3D" id="1.10.10.200">
    <property type="match status" value="1"/>
</dbReference>
<dbReference type="Gene3D" id="3.30.70.980">
    <property type="match status" value="2"/>
</dbReference>
<dbReference type="HAMAP" id="MF_00693">
    <property type="entry name" value="Transcrip_reg_TACO1"/>
    <property type="match status" value="1"/>
</dbReference>
<dbReference type="InterPro" id="IPR017856">
    <property type="entry name" value="Integrase-like_N"/>
</dbReference>
<dbReference type="InterPro" id="IPR048300">
    <property type="entry name" value="TACO1_YebC-like_2nd/3rd_dom"/>
</dbReference>
<dbReference type="InterPro" id="IPR049083">
    <property type="entry name" value="TACO1_YebC_N"/>
</dbReference>
<dbReference type="InterPro" id="IPR002876">
    <property type="entry name" value="Transcrip_reg_TACO1-like"/>
</dbReference>
<dbReference type="InterPro" id="IPR026564">
    <property type="entry name" value="Transcrip_reg_TACO1-like_dom3"/>
</dbReference>
<dbReference type="InterPro" id="IPR029072">
    <property type="entry name" value="YebC-like"/>
</dbReference>
<dbReference type="NCBIfam" id="NF009044">
    <property type="entry name" value="PRK12378.1"/>
    <property type="match status" value="1"/>
</dbReference>
<dbReference type="NCBIfam" id="TIGR01033">
    <property type="entry name" value="YebC/PmpR family DNA-binding transcriptional regulator"/>
    <property type="match status" value="1"/>
</dbReference>
<dbReference type="PANTHER" id="PTHR12532">
    <property type="entry name" value="TRANSLATIONAL ACTIVATOR OF CYTOCHROME C OXIDASE 1"/>
    <property type="match status" value="1"/>
</dbReference>
<dbReference type="PANTHER" id="PTHR12532:SF0">
    <property type="entry name" value="TRANSLATIONAL ACTIVATOR OF CYTOCHROME C OXIDASE 1"/>
    <property type="match status" value="1"/>
</dbReference>
<dbReference type="Pfam" id="PF20772">
    <property type="entry name" value="TACO1_YebC_N"/>
    <property type="match status" value="1"/>
</dbReference>
<dbReference type="Pfam" id="PF01709">
    <property type="entry name" value="Transcrip_reg"/>
    <property type="match status" value="1"/>
</dbReference>
<dbReference type="SUPFAM" id="SSF75625">
    <property type="entry name" value="YebC-like"/>
    <property type="match status" value="1"/>
</dbReference>
<name>Y044_ACHLI</name>
<accession>A9NEA6</accession>
<protein>
    <recommendedName>
        <fullName evidence="1">Probable transcriptional regulatory protein ACL_0044</fullName>
    </recommendedName>
</protein>
<reference key="1">
    <citation type="journal article" date="2011" name="J. Bacteriol.">
        <title>Complete genome and proteome of Acholeplasma laidlawii.</title>
        <authorList>
            <person name="Lazarev V.N."/>
            <person name="Levitskii S.A."/>
            <person name="Basovskii Y.I."/>
            <person name="Chukin M.M."/>
            <person name="Akopian T.A."/>
            <person name="Vereshchagin V.V."/>
            <person name="Kostrjukova E.S."/>
            <person name="Kovaleva G.Y."/>
            <person name="Kazanov M.D."/>
            <person name="Malko D.B."/>
            <person name="Vitreschak A.G."/>
            <person name="Sernova N.V."/>
            <person name="Gelfand M.S."/>
            <person name="Demina I.A."/>
            <person name="Serebryakova M.V."/>
            <person name="Galyamina M.A."/>
            <person name="Vtyurin N.N."/>
            <person name="Rogov S.I."/>
            <person name="Alexeev D.G."/>
            <person name="Ladygina V.G."/>
            <person name="Govorun V.M."/>
        </authorList>
    </citation>
    <scope>NUCLEOTIDE SEQUENCE [LARGE SCALE GENOMIC DNA]</scope>
    <source>
        <strain>PG-8A</strain>
    </source>
</reference>
<keyword id="KW-0963">Cytoplasm</keyword>
<keyword id="KW-0238">DNA-binding</keyword>
<keyword id="KW-1185">Reference proteome</keyword>
<keyword id="KW-0804">Transcription</keyword>
<keyword id="KW-0805">Transcription regulation</keyword>
<comment type="subcellular location">
    <subcellularLocation>
        <location evidence="1">Cytoplasm</location>
    </subcellularLocation>
</comment>
<comment type="similarity">
    <text evidence="1">Belongs to the TACO1 family.</text>
</comment>
<organism>
    <name type="scientific">Acholeplasma laidlawii (strain PG-8A)</name>
    <dbReference type="NCBI Taxonomy" id="441768"/>
    <lineage>
        <taxon>Bacteria</taxon>
        <taxon>Bacillati</taxon>
        <taxon>Mycoplasmatota</taxon>
        <taxon>Mollicutes</taxon>
        <taxon>Acholeplasmatales</taxon>
        <taxon>Acholeplasmataceae</taxon>
        <taxon>Acholeplasma</taxon>
    </lineage>
</organism>
<sequence>MGRAFEVRKASMAKTAAAKSKVYSRYGREIYMAAKAGTPDPETNQALKRVIERAKKEQVTADIIKRNIDKAKGGSDENYAEIRYEGFGPEGSLIIIECLTDNTNRTISDVRKLFNKAYGKLGVSGSVLHQFDHKAVFEVEAPENKLLEILLENDVDITDYEAEEGVVTIYAEPTEYGKIADVLKDNNLESKEEAIMFIPMQTMEIKDPEEQAKFDRLIEGLNELDDVKDVFHNVISSGE</sequence>
<gene>
    <name type="ordered locus">ACL_0044</name>
</gene>
<feature type="chain" id="PRO_1000083141" description="Probable transcriptional regulatory protein ACL_0044">
    <location>
        <begin position="1"/>
        <end position="239"/>
    </location>
</feature>
<evidence type="ECO:0000255" key="1">
    <source>
        <dbReference type="HAMAP-Rule" id="MF_00693"/>
    </source>
</evidence>
<proteinExistence type="inferred from homology"/>